<evidence type="ECO:0000255" key="1">
    <source>
        <dbReference type="HAMAP-Rule" id="MF_00087"/>
    </source>
</evidence>
<gene>
    <name evidence="1" type="primary">hemA</name>
    <name type="ordered locus">Achl_2495</name>
</gene>
<organism>
    <name type="scientific">Pseudarthrobacter chlorophenolicus (strain ATCC 700700 / DSM 12829 / CIP 107037 / JCM 12360 / KCTC 9906 / NCIMB 13794 / A6)</name>
    <name type="common">Arthrobacter chlorophenolicus</name>
    <dbReference type="NCBI Taxonomy" id="452863"/>
    <lineage>
        <taxon>Bacteria</taxon>
        <taxon>Bacillati</taxon>
        <taxon>Actinomycetota</taxon>
        <taxon>Actinomycetes</taxon>
        <taxon>Micrococcales</taxon>
        <taxon>Micrococcaceae</taxon>
        <taxon>Pseudarthrobacter</taxon>
    </lineage>
</organism>
<protein>
    <recommendedName>
        <fullName evidence="1">Glutamyl-tRNA reductase</fullName>
        <shortName evidence="1">GluTR</shortName>
        <ecNumber evidence="1">1.2.1.70</ecNumber>
    </recommendedName>
</protein>
<sequence>MVLFSLVATHADIDLETVAQLSNGSSGIAASVLSGSPAVSGAVVLATCNRYEIYGEAPNTDDVEAARAALVAQISAQSGLAEPLVSRSFSTRTGPEVTRHLFAVSAGLDSAVVGEREIAGQVRRALITAQHEGTASSGLVRLFQAASKTAKDVGAQTALGSRGLSIVSVALDLATDLSENPDWSAKKVVVFGTGAYAGATMALLRERGCTDVSVFSSSGRAEGFVATRGGTALDADSLRPAVAAADVMIGCSGSDTRVEADELAQVRAGSAQPLIAIDLALTHDFDPAVGELNGVELLTLESVRLAAPQEQAESLAQASGIVKGAAKAFEQEREARSVDSAIVALRRHTMDVLDAEMEKVRARHGCTAAAEEVEFALRRMVKQLLHVPTVRARELAANGQQDDYVAALEALYGITVEQPGTAAPAAGQAECPVDHKGLESA</sequence>
<reference key="1">
    <citation type="submission" date="2009-01" db="EMBL/GenBank/DDBJ databases">
        <title>Complete sequence of chromosome of Arthrobacter chlorophenolicus A6.</title>
        <authorList>
            <consortium name="US DOE Joint Genome Institute"/>
            <person name="Lucas S."/>
            <person name="Copeland A."/>
            <person name="Lapidus A."/>
            <person name="Glavina del Rio T."/>
            <person name="Tice H."/>
            <person name="Bruce D."/>
            <person name="Goodwin L."/>
            <person name="Pitluck S."/>
            <person name="Goltsman E."/>
            <person name="Clum A."/>
            <person name="Larimer F."/>
            <person name="Land M."/>
            <person name="Hauser L."/>
            <person name="Kyrpides N."/>
            <person name="Mikhailova N."/>
            <person name="Jansson J."/>
            <person name="Richardson P."/>
        </authorList>
    </citation>
    <scope>NUCLEOTIDE SEQUENCE [LARGE SCALE GENOMIC DNA]</scope>
    <source>
        <strain>ATCC 700700 / DSM 12829 / CIP 107037 / JCM 12360 / KCTC 9906 / NCIMB 13794 / A6</strain>
    </source>
</reference>
<dbReference type="EC" id="1.2.1.70" evidence="1"/>
<dbReference type="EMBL" id="CP001341">
    <property type="protein sequence ID" value="ACL40460.1"/>
    <property type="molecule type" value="Genomic_DNA"/>
</dbReference>
<dbReference type="RefSeq" id="WP_015937672.1">
    <property type="nucleotide sequence ID" value="NC_011886.1"/>
</dbReference>
<dbReference type="SMR" id="B8HBS2"/>
<dbReference type="STRING" id="452863.Achl_2495"/>
<dbReference type="KEGG" id="ach:Achl_2495"/>
<dbReference type="eggNOG" id="COG0373">
    <property type="taxonomic scope" value="Bacteria"/>
</dbReference>
<dbReference type="HOGENOM" id="CLU_035113_4_1_11"/>
<dbReference type="OrthoDB" id="110209at2"/>
<dbReference type="UniPathway" id="UPA00251">
    <property type="reaction ID" value="UER00316"/>
</dbReference>
<dbReference type="Proteomes" id="UP000002505">
    <property type="component" value="Chromosome"/>
</dbReference>
<dbReference type="GO" id="GO:0008883">
    <property type="term" value="F:glutamyl-tRNA reductase activity"/>
    <property type="evidence" value="ECO:0007669"/>
    <property type="project" value="UniProtKB-UniRule"/>
</dbReference>
<dbReference type="GO" id="GO:0050661">
    <property type="term" value="F:NADP binding"/>
    <property type="evidence" value="ECO:0007669"/>
    <property type="project" value="InterPro"/>
</dbReference>
<dbReference type="GO" id="GO:0019353">
    <property type="term" value="P:protoporphyrinogen IX biosynthetic process from glutamate"/>
    <property type="evidence" value="ECO:0007669"/>
    <property type="project" value="TreeGrafter"/>
</dbReference>
<dbReference type="Gene3D" id="3.30.460.30">
    <property type="entry name" value="Glutamyl-tRNA reductase, N-terminal domain"/>
    <property type="match status" value="1"/>
</dbReference>
<dbReference type="Gene3D" id="3.40.50.720">
    <property type="entry name" value="NAD(P)-binding Rossmann-like Domain"/>
    <property type="match status" value="1"/>
</dbReference>
<dbReference type="HAMAP" id="MF_00087">
    <property type="entry name" value="Glu_tRNA_reductase"/>
    <property type="match status" value="1"/>
</dbReference>
<dbReference type="InterPro" id="IPR000343">
    <property type="entry name" value="4pyrrol_synth_GluRdtase"/>
</dbReference>
<dbReference type="InterPro" id="IPR015896">
    <property type="entry name" value="4pyrrol_synth_GluRdtase_dimer"/>
</dbReference>
<dbReference type="InterPro" id="IPR015895">
    <property type="entry name" value="4pyrrol_synth_GluRdtase_N"/>
</dbReference>
<dbReference type="InterPro" id="IPR018214">
    <property type="entry name" value="GluRdtase_CS"/>
</dbReference>
<dbReference type="InterPro" id="IPR036453">
    <property type="entry name" value="GluRdtase_dimer_dom_sf"/>
</dbReference>
<dbReference type="InterPro" id="IPR036343">
    <property type="entry name" value="GluRdtase_N_sf"/>
</dbReference>
<dbReference type="InterPro" id="IPR036291">
    <property type="entry name" value="NAD(P)-bd_dom_sf"/>
</dbReference>
<dbReference type="InterPro" id="IPR006151">
    <property type="entry name" value="Shikm_DH/Glu-tRNA_Rdtase"/>
</dbReference>
<dbReference type="NCBIfam" id="TIGR01035">
    <property type="entry name" value="hemA"/>
    <property type="match status" value="1"/>
</dbReference>
<dbReference type="NCBIfam" id="NF000750">
    <property type="entry name" value="PRK00045.3-4"/>
    <property type="match status" value="1"/>
</dbReference>
<dbReference type="PANTHER" id="PTHR43013">
    <property type="entry name" value="GLUTAMYL-TRNA REDUCTASE"/>
    <property type="match status" value="1"/>
</dbReference>
<dbReference type="PANTHER" id="PTHR43013:SF1">
    <property type="entry name" value="GLUTAMYL-TRNA REDUCTASE"/>
    <property type="match status" value="1"/>
</dbReference>
<dbReference type="Pfam" id="PF00745">
    <property type="entry name" value="GlutR_dimer"/>
    <property type="match status" value="1"/>
</dbReference>
<dbReference type="Pfam" id="PF05201">
    <property type="entry name" value="GlutR_N"/>
    <property type="match status" value="1"/>
</dbReference>
<dbReference type="Pfam" id="PF01488">
    <property type="entry name" value="Shikimate_DH"/>
    <property type="match status" value="1"/>
</dbReference>
<dbReference type="PIRSF" id="PIRSF000445">
    <property type="entry name" value="4pyrrol_synth_GluRdtase"/>
    <property type="match status" value="1"/>
</dbReference>
<dbReference type="SUPFAM" id="SSF69742">
    <property type="entry name" value="Glutamyl tRNA-reductase catalytic, N-terminal domain"/>
    <property type="match status" value="1"/>
</dbReference>
<dbReference type="SUPFAM" id="SSF69075">
    <property type="entry name" value="Glutamyl tRNA-reductase dimerization domain"/>
    <property type="match status" value="1"/>
</dbReference>
<dbReference type="SUPFAM" id="SSF51735">
    <property type="entry name" value="NAD(P)-binding Rossmann-fold domains"/>
    <property type="match status" value="1"/>
</dbReference>
<dbReference type="PROSITE" id="PS00747">
    <property type="entry name" value="GLUTR"/>
    <property type="match status" value="1"/>
</dbReference>
<comment type="function">
    <text evidence="1">Catalyzes the NADPH-dependent reduction of glutamyl-tRNA(Glu) to glutamate 1-semialdehyde (GSA).</text>
</comment>
<comment type="catalytic activity">
    <reaction evidence="1">
        <text>(S)-4-amino-5-oxopentanoate + tRNA(Glu) + NADP(+) = L-glutamyl-tRNA(Glu) + NADPH + H(+)</text>
        <dbReference type="Rhea" id="RHEA:12344"/>
        <dbReference type="Rhea" id="RHEA-COMP:9663"/>
        <dbReference type="Rhea" id="RHEA-COMP:9680"/>
        <dbReference type="ChEBI" id="CHEBI:15378"/>
        <dbReference type="ChEBI" id="CHEBI:57501"/>
        <dbReference type="ChEBI" id="CHEBI:57783"/>
        <dbReference type="ChEBI" id="CHEBI:58349"/>
        <dbReference type="ChEBI" id="CHEBI:78442"/>
        <dbReference type="ChEBI" id="CHEBI:78520"/>
        <dbReference type="EC" id="1.2.1.70"/>
    </reaction>
</comment>
<comment type="pathway">
    <text evidence="1">Porphyrin-containing compound metabolism; protoporphyrin-IX biosynthesis; 5-aminolevulinate from L-glutamyl-tRNA(Glu): step 1/2.</text>
</comment>
<comment type="subunit">
    <text evidence="1">Homodimer.</text>
</comment>
<comment type="domain">
    <text evidence="1">Possesses an unusual extended V-shaped dimeric structure with each monomer consisting of three distinct domains arranged along a curved 'spinal' alpha-helix. The N-terminal catalytic domain specifically recognizes the glutamate moiety of the substrate. The second domain is the NADPH-binding domain, and the third C-terminal domain is responsible for dimerization.</text>
</comment>
<comment type="miscellaneous">
    <text evidence="1">During catalysis, the active site Cys acts as a nucleophile attacking the alpha-carbonyl group of tRNA-bound glutamate with the formation of a thioester intermediate between enzyme and glutamate, and the concomitant release of tRNA(Glu). The thioester intermediate is finally reduced by direct hydride transfer from NADPH, to form the product GSA.</text>
</comment>
<comment type="similarity">
    <text evidence="1">Belongs to the glutamyl-tRNA reductase family.</text>
</comment>
<feature type="chain" id="PRO_1000118465" description="Glutamyl-tRNA reductase">
    <location>
        <begin position="1"/>
        <end position="441"/>
    </location>
</feature>
<feature type="active site" description="Nucleophile" evidence="1">
    <location>
        <position position="48"/>
    </location>
</feature>
<feature type="binding site" evidence="1">
    <location>
        <begin position="47"/>
        <end position="50"/>
    </location>
    <ligand>
        <name>substrate</name>
    </ligand>
</feature>
<feature type="binding site" evidence="1">
    <location>
        <position position="110"/>
    </location>
    <ligand>
        <name>substrate</name>
    </ligand>
</feature>
<feature type="binding site" evidence="1">
    <location>
        <begin position="115"/>
        <end position="117"/>
    </location>
    <ligand>
        <name>substrate</name>
    </ligand>
</feature>
<feature type="binding site" evidence="1">
    <location>
        <position position="121"/>
    </location>
    <ligand>
        <name>substrate</name>
    </ligand>
</feature>
<feature type="binding site" evidence="1">
    <location>
        <begin position="192"/>
        <end position="197"/>
    </location>
    <ligand>
        <name>NADP(+)</name>
        <dbReference type="ChEBI" id="CHEBI:58349"/>
    </ligand>
</feature>
<feature type="site" description="Important for activity" evidence="1">
    <location>
        <position position="100"/>
    </location>
</feature>
<name>HEM1_PSECP</name>
<accession>B8HBS2</accession>
<keyword id="KW-0521">NADP</keyword>
<keyword id="KW-0560">Oxidoreductase</keyword>
<keyword id="KW-0627">Porphyrin biosynthesis</keyword>
<proteinExistence type="inferred from homology"/>